<organism>
    <name type="scientific">Arabidopsis thaliana</name>
    <name type="common">Mouse-ear cress</name>
    <dbReference type="NCBI Taxonomy" id="3702"/>
    <lineage>
        <taxon>Eukaryota</taxon>
        <taxon>Viridiplantae</taxon>
        <taxon>Streptophyta</taxon>
        <taxon>Embryophyta</taxon>
        <taxon>Tracheophyta</taxon>
        <taxon>Spermatophyta</taxon>
        <taxon>Magnoliopsida</taxon>
        <taxon>eudicotyledons</taxon>
        <taxon>Gunneridae</taxon>
        <taxon>Pentapetalae</taxon>
        <taxon>rosids</taxon>
        <taxon>malvids</taxon>
        <taxon>Brassicales</taxon>
        <taxon>Brassicaceae</taxon>
        <taxon>Camelineae</taxon>
        <taxon>Arabidopsis</taxon>
    </lineage>
</organism>
<proteinExistence type="evidence at protein level"/>
<protein>
    <recommendedName>
        <fullName evidence="9">OVARIAN TUMOR DOMAIN-containing deubiquitinating enzyme 6</fullName>
        <shortName evidence="9">OTU domain-containing protein 6</shortName>
        <ecNumber evidence="6">3.4.19.12</ecNumber>
    </recommendedName>
    <alternativeName>
        <fullName evidence="9">Deubiquitinating enzyme OTU6</fullName>
    </alternativeName>
    <alternativeName>
        <fullName evidence="9">Otubain-like deubiquitinase 1</fullName>
    </alternativeName>
</protein>
<feature type="chain" id="PRO_0000447756" description="OVARIAN TUMOR DOMAIN-containing deubiquitinating enzyme 6">
    <location>
        <begin position="1"/>
        <end position="505"/>
    </location>
</feature>
<feature type="domain" description="OTU" evidence="3">
    <location>
        <begin position="216"/>
        <end position="339"/>
    </location>
</feature>
<feature type="domain" description="UBA" evidence="4">
    <location>
        <begin position="446"/>
        <end position="491"/>
    </location>
</feature>
<feature type="region of interest" description="Disordered" evidence="5">
    <location>
        <begin position="1"/>
        <end position="191"/>
    </location>
</feature>
<feature type="region of interest" description="Disordered" evidence="5">
    <location>
        <begin position="416"/>
        <end position="447"/>
    </location>
</feature>
<feature type="compositionally biased region" description="Low complexity" evidence="5">
    <location>
        <begin position="9"/>
        <end position="30"/>
    </location>
</feature>
<feature type="compositionally biased region" description="Basic and acidic residues" evidence="5">
    <location>
        <begin position="51"/>
        <end position="72"/>
    </location>
</feature>
<feature type="compositionally biased region" description="Acidic residues" evidence="5">
    <location>
        <begin position="73"/>
        <end position="86"/>
    </location>
</feature>
<feature type="compositionally biased region" description="Pro residues" evidence="5">
    <location>
        <begin position="115"/>
        <end position="124"/>
    </location>
</feature>
<feature type="compositionally biased region" description="Low complexity" evidence="5">
    <location>
        <begin position="159"/>
        <end position="173"/>
    </location>
</feature>
<feature type="compositionally biased region" description="Basic and acidic residues" evidence="5">
    <location>
        <begin position="174"/>
        <end position="188"/>
    </location>
</feature>
<feature type="compositionally biased region" description="Low complexity" evidence="5">
    <location>
        <begin position="421"/>
        <end position="441"/>
    </location>
</feature>
<feature type="active site" evidence="2">
    <location>
        <position position="224"/>
    </location>
</feature>
<feature type="active site" description="Nucleophile" evidence="1">
    <location>
        <position position="227"/>
    </location>
</feature>
<feature type="active site" evidence="1">
    <location>
        <position position="332"/>
    </location>
</feature>
<feature type="splice variant" id="VSP_060261" description="In isoform 2.">
    <original>R</original>
    <variation>TG</variation>
    <location>
        <position position="435"/>
    </location>
</feature>
<dbReference type="EC" id="3.4.19.12" evidence="6"/>
<dbReference type="EMBL" id="JQ013451">
    <property type="protein sequence ID" value="AFS88954.1"/>
    <property type="molecule type" value="mRNA"/>
</dbReference>
<dbReference type="EMBL" id="AC006233">
    <property type="protein sequence ID" value="AAD41995.2"/>
    <property type="molecule type" value="Genomic_DNA"/>
</dbReference>
<dbReference type="EMBL" id="CP002685">
    <property type="protein sequence ID" value="AEC07979.1"/>
    <property type="molecule type" value="Genomic_DNA"/>
</dbReference>
<dbReference type="EMBL" id="CP002685">
    <property type="protein sequence ID" value="AEC07980.1"/>
    <property type="molecule type" value="Genomic_DNA"/>
</dbReference>
<dbReference type="EMBL" id="CP002685">
    <property type="protein sequence ID" value="AEC07981.1"/>
    <property type="molecule type" value="Genomic_DNA"/>
</dbReference>
<dbReference type="EMBL" id="CP002685">
    <property type="protein sequence ID" value="AEC07984.1"/>
    <property type="molecule type" value="Genomic_DNA"/>
</dbReference>
<dbReference type="EMBL" id="CP002685">
    <property type="protein sequence ID" value="AEC07982.1"/>
    <property type="molecule type" value="Genomic_DNA"/>
</dbReference>
<dbReference type="EMBL" id="CP002685">
    <property type="protein sequence ID" value="AEC07983.1"/>
    <property type="molecule type" value="Genomic_DNA"/>
</dbReference>
<dbReference type="EMBL" id="AY058065">
    <property type="protein sequence ID" value="AAL24173.1"/>
    <property type="molecule type" value="mRNA"/>
</dbReference>
<dbReference type="EMBL" id="BT002479">
    <property type="protein sequence ID" value="AAO00839.1"/>
    <property type="molecule type" value="mRNA"/>
</dbReference>
<dbReference type="EMBL" id="BT008876">
    <property type="protein sequence ID" value="AAP68315.1"/>
    <property type="molecule type" value="mRNA"/>
</dbReference>
<dbReference type="PIR" id="H84671">
    <property type="entry name" value="H84671"/>
</dbReference>
<dbReference type="RefSeq" id="NP_001189616.1">
    <molecule id="Q9XIP2-2"/>
    <property type="nucleotide sequence ID" value="NM_001202687.2"/>
</dbReference>
<dbReference type="RefSeq" id="NP_565648.1">
    <molecule id="Q9XIP2-1"/>
    <property type="nucleotide sequence ID" value="NM_128294.2"/>
</dbReference>
<dbReference type="RefSeq" id="NP_850099.1">
    <molecule id="Q9XIP2-1"/>
    <property type="nucleotide sequence ID" value="NM_179768.4"/>
</dbReference>
<dbReference type="RefSeq" id="NP_973544.1">
    <molecule id="Q9XIP2-2"/>
    <property type="nucleotide sequence ID" value="NM_201815.2"/>
</dbReference>
<dbReference type="RefSeq" id="NP_973545.2">
    <molecule id="Q9XIP2-2"/>
    <property type="nucleotide sequence ID" value="NM_201816.5"/>
</dbReference>
<dbReference type="RefSeq" id="NP_973546.2">
    <molecule id="Q9XIP2-2"/>
    <property type="nucleotide sequence ID" value="NM_201817.2"/>
</dbReference>
<dbReference type="SMR" id="Q9XIP2"/>
<dbReference type="FunCoup" id="Q9XIP2">
    <property type="interactions" value="1536"/>
</dbReference>
<dbReference type="STRING" id="3702.Q9XIP2"/>
<dbReference type="MEROPS" id="C85.001"/>
<dbReference type="iPTMnet" id="Q9XIP2"/>
<dbReference type="PaxDb" id="3702-AT2G27350.5"/>
<dbReference type="ProteomicsDB" id="175525"/>
<dbReference type="ProteomicsDB" id="177653">
    <molecule id="Q9XIP2-1"/>
</dbReference>
<dbReference type="EnsemblPlants" id="AT2G27350.1">
    <molecule id="Q9XIP2-1"/>
    <property type="protein sequence ID" value="AT2G27350.1"/>
    <property type="gene ID" value="AT2G27350"/>
</dbReference>
<dbReference type="EnsemblPlants" id="AT2G27350.2">
    <molecule id="Q9XIP2-1"/>
    <property type="protein sequence ID" value="AT2G27350.2"/>
    <property type="gene ID" value="AT2G27350"/>
</dbReference>
<dbReference type="EnsemblPlants" id="AT2G27350.3">
    <molecule id="Q9XIP2-2"/>
    <property type="protein sequence ID" value="AT2G27350.3"/>
    <property type="gene ID" value="AT2G27350"/>
</dbReference>
<dbReference type="EnsemblPlants" id="AT2G27350.4">
    <molecule id="Q9XIP2-2"/>
    <property type="protein sequence ID" value="AT2G27350.4"/>
    <property type="gene ID" value="AT2G27350"/>
</dbReference>
<dbReference type="EnsemblPlants" id="AT2G27350.5">
    <molecule id="Q9XIP2-2"/>
    <property type="protein sequence ID" value="AT2G27350.5"/>
    <property type="gene ID" value="AT2G27350"/>
</dbReference>
<dbReference type="EnsemblPlants" id="AT2G27350.6">
    <molecule id="Q9XIP2-2"/>
    <property type="protein sequence ID" value="AT2G27350.6"/>
    <property type="gene ID" value="AT2G27350"/>
</dbReference>
<dbReference type="GeneID" id="817278"/>
<dbReference type="Gramene" id="AT2G27350.1">
    <molecule id="Q9XIP2-1"/>
    <property type="protein sequence ID" value="AT2G27350.1"/>
    <property type="gene ID" value="AT2G27350"/>
</dbReference>
<dbReference type="Gramene" id="AT2G27350.2">
    <molecule id="Q9XIP2-1"/>
    <property type="protein sequence ID" value="AT2G27350.2"/>
    <property type="gene ID" value="AT2G27350"/>
</dbReference>
<dbReference type="Gramene" id="AT2G27350.3">
    <molecule id="Q9XIP2-2"/>
    <property type="protein sequence ID" value="AT2G27350.3"/>
    <property type="gene ID" value="AT2G27350"/>
</dbReference>
<dbReference type="Gramene" id="AT2G27350.4">
    <molecule id="Q9XIP2-2"/>
    <property type="protein sequence ID" value="AT2G27350.4"/>
    <property type="gene ID" value="AT2G27350"/>
</dbReference>
<dbReference type="Gramene" id="AT2G27350.5">
    <molecule id="Q9XIP2-2"/>
    <property type="protein sequence ID" value="AT2G27350.5"/>
    <property type="gene ID" value="AT2G27350"/>
</dbReference>
<dbReference type="Gramene" id="AT2G27350.6">
    <molecule id="Q9XIP2-2"/>
    <property type="protein sequence ID" value="AT2G27350.6"/>
    <property type="gene ID" value="AT2G27350"/>
</dbReference>
<dbReference type="KEGG" id="ath:AT2G27350"/>
<dbReference type="Araport" id="AT2G27350"/>
<dbReference type="TAIR" id="AT2G27350">
    <property type="gene designation" value="OTLD1"/>
</dbReference>
<dbReference type="eggNOG" id="KOG2605">
    <property type="taxonomic scope" value="Eukaryota"/>
</dbReference>
<dbReference type="HOGENOM" id="CLU_040365_0_0_1"/>
<dbReference type="InParanoid" id="Q9XIP2"/>
<dbReference type="OMA" id="EQGPCFV"/>
<dbReference type="PhylomeDB" id="Q9XIP2"/>
<dbReference type="PRO" id="PR:Q9XIP2"/>
<dbReference type="Proteomes" id="UP000006548">
    <property type="component" value="Chromosome 2"/>
</dbReference>
<dbReference type="ExpressionAtlas" id="Q9XIP2">
    <property type="expression patterns" value="baseline and differential"/>
</dbReference>
<dbReference type="GO" id="GO:0005737">
    <property type="term" value="C:cytoplasm"/>
    <property type="evidence" value="ECO:0000314"/>
    <property type="project" value="UniProtKB"/>
</dbReference>
<dbReference type="GO" id="GO:0005634">
    <property type="term" value="C:nucleus"/>
    <property type="evidence" value="ECO:0000314"/>
    <property type="project" value="UniProtKB"/>
</dbReference>
<dbReference type="GO" id="GO:0003682">
    <property type="term" value="F:chromatin binding"/>
    <property type="evidence" value="ECO:0000314"/>
    <property type="project" value="UniProtKB"/>
</dbReference>
<dbReference type="GO" id="GO:0004843">
    <property type="term" value="F:cysteine-type deubiquitinase activity"/>
    <property type="evidence" value="ECO:0007669"/>
    <property type="project" value="UniProtKB-EC"/>
</dbReference>
<dbReference type="GO" id="GO:0042393">
    <property type="term" value="F:histone binding"/>
    <property type="evidence" value="ECO:0000314"/>
    <property type="project" value="UniProtKB"/>
</dbReference>
<dbReference type="GO" id="GO:0031491">
    <property type="term" value="F:nucleosome binding"/>
    <property type="evidence" value="ECO:0000314"/>
    <property type="project" value="UniProtKB"/>
</dbReference>
<dbReference type="GO" id="GO:0040029">
    <property type="term" value="P:epigenetic regulation of gene expression"/>
    <property type="evidence" value="ECO:0000315"/>
    <property type="project" value="UniProtKB"/>
</dbReference>
<dbReference type="GO" id="GO:0045892">
    <property type="term" value="P:negative regulation of DNA-templated transcription"/>
    <property type="evidence" value="ECO:0000314"/>
    <property type="project" value="UniProtKB"/>
</dbReference>
<dbReference type="GO" id="GO:0045814">
    <property type="term" value="P:negative regulation of gene expression, epigenetic"/>
    <property type="evidence" value="ECO:0000314"/>
    <property type="project" value="UniProtKB"/>
</dbReference>
<dbReference type="GO" id="GO:0045893">
    <property type="term" value="P:positive regulation of DNA-templated transcription"/>
    <property type="evidence" value="ECO:0000315"/>
    <property type="project" value="UniProtKB"/>
</dbReference>
<dbReference type="GO" id="GO:0045927">
    <property type="term" value="P:positive regulation of growth"/>
    <property type="evidence" value="ECO:0000315"/>
    <property type="project" value="UniProtKB"/>
</dbReference>
<dbReference type="GO" id="GO:0006508">
    <property type="term" value="P:proteolysis"/>
    <property type="evidence" value="ECO:0007669"/>
    <property type="project" value="UniProtKB-KW"/>
</dbReference>
<dbReference type="GO" id="GO:1902275">
    <property type="term" value="P:regulation of chromatin organization"/>
    <property type="evidence" value="ECO:0000315"/>
    <property type="project" value="UniProtKB"/>
</dbReference>
<dbReference type="CDD" id="cd22796">
    <property type="entry name" value="OTU_plant_OTU6-like"/>
    <property type="match status" value="1"/>
</dbReference>
<dbReference type="FunFam" id="3.90.70.80:FF:000008">
    <property type="entry name" value="OTU domain-containing protein 5"/>
    <property type="match status" value="1"/>
</dbReference>
<dbReference type="Gene3D" id="3.90.70.80">
    <property type="match status" value="1"/>
</dbReference>
<dbReference type="InterPro" id="IPR003323">
    <property type="entry name" value="OTU_dom"/>
</dbReference>
<dbReference type="InterPro" id="IPR038765">
    <property type="entry name" value="Papain-like_cys_pep_sf"/>
</dbReference>
<dbReference type="InterPro" id="IPR050704">
    <property type="entry name" value="Peptidase_C85-like"/>
</dbReference>
<dbReference type="InterPro" id="IPR015940">
    <property type="entry name" value="UBA"/>
</dbReference>
<dbReference type="InterPro" id="IPR009060">
    <property type="entry name" value="UBA-like_sf"/>
</dbReference>
<dbReference type="PANTHER" id="PTHR12419">
    <property type="entry name" value="OTU DOMAIN CONTAINING PROTEIN"/>
    <property type="match status" value="1"/>
</dbReference>
<dbReference type="PANTHER" id="PTHR12419:SF4">
    <property type="entry name" value="OTU DOMAIN-CONTAINING PROTEIN 5"/>
    <property type="match status" value="1"/>
</dbReference>
<dbReference type="Pfam" id="PF02338">
    <property type="entry name" value="OTU"/>
    <property type="match status" value="1"/>
</dbReference>
<dbReference type="SUPFAM" id="SSF54001">
    <property type="entry name" value="Cysteine proteinases"/>
    <property type="match status" value="1"/>
</dbReference>
<dbReference type="SUPFAM" id="SSF46934">
    <property type="entry name" value="UBA-like"/>
    <property type="match status" value="1"/>
</dbReference>
<dbReference type="PROSITE" id="PS50802">
    <property type="entry name" value="OTU"/>
    <property type="match status" value="1"/>
</dbReference>
<dbReference type="PROSITE" id="PS50030">
    <property type="entry name" value="UBA"/>
    <property type="match status" value="1"/>
</dbReference>
<name>OTU6_ARATH</name>
<evidence type="ECO:0000250" key="1">
    <source>
        <dbReference type="UniProtKB" id="Q96G74"/>
    </source>
</evidence>
<evidence type="ECO:0000255" key="2"/>
<evidence type="ECO:0000255" key="3">
    <source>
        <dbReference type="PROSITE-ProRule" id="PRU00139"/>
    </source>
</evidence>
<evidence type="ECO:0000255" key="4">
    <source>
        <dbReference type="PROSITE-ProRule" id="PRU00212"/>
    </source>
</evidence>
<evidence type="ECO:0000256" key="5">
    <source>
        <dbReference type="SAM" id="MobiDB-lite"/>
    </source>
</evidence>
<evidence type="ECO:0000269" key="6">
    <source>
    </source>
</evidence>
<evidence type="ECO:0000269" key="7">
    <source>
    </source>
</evidence>
<evidence type="ECO:0000269" key="8">
    <source>
    </source>
</evidence>
<evidence type="ECO:0000303" key="9">
    <source>
    </source>
</evidence>
<evidence type="ECO:0000305" key="10"/>
<evidence type="ECO:0000312" key="11">
    <source>
        <dbReference type="Araport" id="AT2G27350"/>
    </source>
</evidence>
<evidence type="ECO:0000312" key="12">
    <source>
        <dbReference type="EMBL" id="AEC07979.1"/>
    </source>
</evidence>
<accession>Q9XIP2</accession>
<accession>F4IFS7</accession>
<accession>Q93Z76</accession>
<gene>
    <name evidence="9" type="primary">OTU6</name>
    <name evidence="9" type="synonym">OTLD1</name>
    <name evidence="11" type="ordered locus">At2g27350</name>
    <name evidence="12" type="ORF">F12K2.7</name>
</gene>
<keyword id="KW-0010">Activator</keyword>
<keyword id="KW-0025">Alternative splicing</keyword>
<keyword id="KW-0156">Chromatin regulator</keyword>
<keyword id="KW-0963">Cytoplasm</keyword>
<keyword id="KW-0378">Hydrolase</keyword>
<keyword id="KW-0539">Nucleus</keyword>
<keyword id="KW-0645">Protease</keyword>
<keyword id="KW-1185">Reference proteome</keyword>
<keyword id="KW-0678">Repressor</keyword>
<keyword id="KW-0833">Ubl conjugation pathway</keyword>
<reference key="1">
    <citation type="journal article" date="2014" name="Front. Plant Sci.">
        <title>Distinct phylogenetic relationships and biochemical properties of Arabidopsis ovarian tumor-related deubiquitinases support their functional differentiation.</title>
        <authorList>
            <person name="Radjacommare R."/>
            <person name="Usharani R."/>
            <person name="Kuo C.-H."/>
            <person name="Fu H."/>
        </authorList>
    </citation>
    <scope>NUCLEOTIDE SEQUENCE [MRNA] (ISOFORM 2)</scope>
    <scope>FUNCTION</scope>
    <scope>GENE FAMILY</scope>
    <scope>NOMENCLATURE</scope>
</reference>
<reference key="2">
    <citation type="journal article" date="1999" name="Nature">
        <title>Sequence and analysis of chromosome 2 of the plant Arabidopsis thaliana.</title>
        <authorList>
            <person name="Lin X."/>
            <person name="Kaul S."/>
            <person name="Rounsley S.D."/>
            <person name="Shea T.P."/>
            <person name="Benito M.-I."/>
            <person name="Town C.D."/>
            <person name="Fujii C.Y."/>
            <person name="Mason T.M."/>
            <person name="Bowman C.L."/>
            <person name="Barnstead M.E."/>
            <person name="Feldblyum T.V."/>
            <person name="Buell C.R."/>
            <person name="Ketchum K.A."/>
            <person name="Lee J.J."/>
            <person name="Ronning C.M."/>
            <person name="Koo H.L."/>
            <person name="Moffat K.S."/>
            <person name="Cronin L.A."/>
            <person name="Shen M."/>
            <person name="Pai G."/>
            <person name="Van Aken S."/>
            <person name="Umayam L."/>
            <person name="Tallon L.J."/>
            <person name="Gill J.E."/>
            <person name="Adams M.D."/>
            <person name="Carrera A.J."/>
            <person name="Creasy T.H."/>
            <person name="Goodman H.M."/>
            <person name="Somerville C.R."/>
            <person name="Copenhaver G.P."/>
            <person name="Preuss D."/>
            <person name="Nierman W.C."/>
            <person name="White O."/>
            <person name="Eisen J.A."/>
            <person name="Salzberg S.L."/>
            <person name="Fraser C.M."/>
            <person name="Venter J.C."/>
        </authorList>
    </citation>
    <scope>NUCLEOTIDE SEQUENCE [LARGE SCALE GENOMIC DNA]</scope>
    <source>
        <strain>cv. Columbia</strain>
    </source>
</reference>
<reference key="3">
    <citation type="journal article" date="2017" name="Plant J.">
        <title>Araport11: a complete reannotation of the Arabidopsis thaliana reference genome.</title>
        <authorList>
            <person name="Cheng C.Y."/>
            <person name="Krishnakumar V."/>
            <person name="Chan A.P."/>
            <person name="Thibaud-Nissen F."/>
            <person name="Schobel S."/>
            <person name="Town C.D."/>
        </authorList>
    </citation>
    <scope>GENOME REANNOTATION</scope>
    <source>
        <strain>cv. Columbia</strain>
    </source>
</reference>
<reference key="4">
    <citation type="journal article" date="2003" name="Science">
        <title>Empirical analysis of transcriptional activity in the Arabidopsis genome.</title>
        <authorList>
            <person name="Yamada K."/>
            <person name="Lim J."/>
            <person name="Dale J.M."/>
            <person name="Chen H."/>
            <person name="Shinn P."/>
            <person name="Palm C.J."/>
            <person name="Southwick A.M."/>
            <person name="Wu H.C."/>
            <person name="Kim C.J."/>
            <person name="Nguyen M."/>
            <person name="Pham P.K."/>
            <person name="Cheuk R.F."/>
            <person name="Karlin-Newmann G."/>
            <person name="Liu S.X."/>
            <person name="Lam B."/>
            <person name="Sakano H."/>
            <person name="Wu T."/>
            <person name="Yu G."/>
            <person name="Miranda M."/>
            <person name="Quach H.L."/>
            <person name="Tripp M."/>
            <person name="Chang C.H."/>
            <person name="Lee J.M."/>
            <person name="Toriumi M.J."/>
            <person name="Chan M.M."/>
            <person name="Tang C.C."/>
            <person name="Onodera C.S."/>
            <person name="Deng J.M."/>
            <person name="Akiyama K."/>
            <person name="Ansari Y."/>
            <person name="Arakawa T."/>
            <person name="Banh J."/>
            <person name="Banno F."/>
            <person name="Bowser L."/>
            <person name="Brooks S.Y."/>
            <person name="Carninci P."/>
            <person name="Chao Q."/>
            <person name="Choy N."/>
            <person name="Enju A."/>
            <person name="Goldsmith A.D."/>
            <person name="Gurjal M."/>
            <person name="Hansen N.F."/>
            <person name="Hayashizaki Y."/>
            <person name="Johnson-Hopson C."/>
            <person name="Hsuan V.W."/>
            <person name="Iida K."/>
            <person name="Karnes M."/>
            <person name="Khan S."/>
            <person name="Koesema E."/>
            <person name="Ishida J."/>
            <person name="Jiang P.X."/>
            <person name="Jones T."/>
            <person name="Kawai J."/>
            <person name="Kamiya A."/>
            <person name="Meyers C."/>
            <person name="Nakajima M."/>
            <person name="Narusaka M."/>
            <person name="Seki M."/>
            <person name="Sakurai T."/>
            <person name="Satou M."/>
            <person name="Tamse R."/>
            <person name="Vaysberg M."/>
            <person name="Wallender E.K."/>
            <person name="Wong C."/>
            <person name="Yamamura Y."/>
            <person name="Yuan S."/>
            <person name="Shinozaki K."/>
            <person name="Davis R.W."/>
            <person name="Theologis A."/>
            <person name="Ecker J.R."/>
        </authorList>
    </citation>
    <scope>NUCLEOTIDE SEQUENCE [LARGE SCALE MRNA] (ISOFORM 1)</scope>
    <source>
        <strain>cv. Columbia</strain>
    </source>
</reference>
<reference key="5">
    <citation type="journal article" date="2011" name="Proc. Natl. Acad. Sci. U.S.A.">
        <title>Involvement of KDM1C histone demethylase-OTLD1 otubain-like histone deubiquitinase complexes in plant gene repression.</title>
        <authorList>
            <person name="Krichevsky A."/>
            <person name="Zaltsman A."/>
            <person name="Lacroix B."/>
            <person name="Citovsky V."/>
        </authorList>
    </citation>
    <scope>FUNCTION</scope>
    <scope>DISRUPTION PHENOTYPE</scope>
    <scope>CATALYTIC ACTIVITY</scope>
    <scope>INTERACTION WITH LDL1/KDM1C</scope>
    <scope>SUBCELLULAR LOCATION</scope>
    <source>
        <strain>cv. Columbia</strain>
    </source>
</reference>
<reference key="6">
    <citation type="journal article" date="2016" name="Sci. Signal.">
        <title>The histone deubiquitinase OTLD1 targets euchromatin to regulate plant growth.</title>
        <authorList>
            <person name="Keren I."/>
            <person name="Citovsky V."/>
        </authorList>
    </citation>
    <scope>FUNCTION</scope>
    <scope>DISRUPTION PHENOTYPE</scope>
    <scope>TISSUE SPECIFICITY</scope>
</reference>
<reference key="7">
    <citation type="journal article" date="2017" name="Epigenetics">
        <title>Activation of gene expression by histone deubiquitinase OTLD1.</title>
        <authorList>
            <person name="Keren I."/>
            <person name="Citovsky V."/>
        </authorList>
    </citation>
    <scope>FUNCTION</scope>
    <scope>DISRUPTION PHENOTYPE</scope>
    <source>
        <strain>cv. Columbia</strain>
    </source>
</reference>
<sequence>MTRILVQRGSSGSSSNSSRPSSSSSSSSGSETQINNNIPVPPVTIDEEITDEKQEEVTVVEKAECSDAKDVAVDSDEPADREDDEGLVVAENVHVQSEGIDCDSPVSGGSNSDSPPVPAPPPKPSSTVNPGSNRSVLGSFGALRIGPTRRAAGPRSLVSSRSSPTGSHPSSPRSHSENEGYNSSDEHMPCYVPSHPGSGLEREHQFEAEIRYSKGFEIRRMLEDGNCLFRAVADQVYGDSEAYDLARQMCMDYMEQERDHFSQFITEGFTSYLKRKRRDKVYGNNVEIQALAEMYNRPIHIYSYSTEPINIFQGNYSTDTPPIRLSYHHGNHYNSLVDPHRLTVGAGLGFSSLSGRHVDKEQVKAAIKAQQEHQIDNALLAEGRFYSDLELTEKEIERSVMEASRAEYLMEWSKPRIGPKESSTSNAETSSSGARPSGSDSKPAEAVKEKTVLSSSIEMVLSMGFSYAQAMEAYSIFGDDVDSMVCYVLETSCGGNNRRKGKATE</sequence>
<comment type="function">
    <text evidence="6 7 8 9">Hydrolase that can remove conjugated ubiquitin from proteins in vitro and may therefore play an important regulatory role at the level of protein turnover by preventing degradation (PubMed:21690391, PubMed:24659992). Binds chromatin (e.g. nucleosomes and histones) and has enzymatic histone deubiquitinase activity, specific for the H2B histone (PubMed:21690391, PubMed:28703681). Can both repress (e.g. OSR2) and promote (e.g. AN3) the expression of target genes by associating with chromatin, deubiquitinating H2B and regulating its euchromatic histone marks (e.g. H3ac and H3K4me) (PubMed:28703681). In association with LDL1/KDM1C, involved in transcriptional gene repression via histone deubiquitination and demethylation (PubMed:21690391). Promotes the concerted epigenetic regulation and repression (e.g. the removal of euchromatic histone acetylation, ubiquitination, and methylation marks) of a set of genes (e.g. GA20OX, WUS, OSR2, ARL and ABI5) that collectively limit plant growth thus stimulating plant growth and increasing cell size (PubMed:27999174).</text>
</comment>
<comment type="catalytic activity">
    <reaction evidence="6">
        <text>Thiol-dependent hydrolysis of ester, thioester, amide, peptide and isopeptide bonds formed by the C-terminal Gly of ubiquitin (a 76-residue protein attached to proteins as an intracellular targeting signal).</text>
        <dbReference type="EC" id="3.4.19.12"/>
    </reaction>
</comment>
<comment type="subunit">
    <text evidence="6">Interacts with KDM1C.</text>
</comment>
<comment type="subcellular location">
    <subcellularLocation>
        <location evidence="6">Nucleus</location>
    </subcellularLocation>
    <subcellularLocation>
        <location evidence="6">Cytoplasm</location>
    </subcellularLocation>
</comment>
<comment type="alternative products">
    <event type="alternative splicing"/>
    <isoform>
        <id>Q9XIP2-1</id>
        <name>1</name>
        <name evidence="9">OTLD1b</name>
        <sequence type="displayed"/>
    </isoform>
    <isoform>
        <id>Q9XIP2-2</id>
        <name>2</name>
        <name evidence="9">OTLD1a</name>
        <sequence type="described" ref="VSP_060261"/>
    </isoform>
</comment>
<comment type="tissue specificity">
    <text evidence="7">Mostly expressed in stems flowers and siliques, and, to a lower extent, in leaves, roots and seedlings.</text>
</comment>
<comment type="disruption phenotype">
    <text evidence="6 7 8">Up-regulated expression of GLP2A/GLP5A due to derepression associated with H2B hyperubiquitination of the target chromatin and H3K4 hypermethylation (PubMed:21690391). Abnormal hallmarks of euchromatin including H3 hyperacetylation, H2B monoubiquitination and H3K4 trimethylation in the gene encoding OSR2 leading to its increased expression (PubMed:27999174). Repressed expression of the AN3 gene associated with epigenetic modification (e.g. H2B hyperubiquitination and reduced H3ac and H3K4me) of its chromatin (PubMed:28703681).</text>
</comment>
<comment type="similarity">
    <text evidence="10">Belongs to the peptidase C85 family.</text>
</comment>